<organism>
    <name type="scientific">Thermoplasma volcanium (strain ATCC 51530 / DSM 4299 / JCM 9571 / NBRC 15438 / GSS1)</name>
    <dbReference type="NCBI Taxonomy" id="273116"/>
    <lineage>
        <taxon>Archaea</taxon>
        <taxon>Methanobacteriati</taxon>
        <taxon>Thermoplasmatota</taxon>
        <taxon>Thermoplasmata</taxon>
        <taxon>Thermoplasmatales</taxon>
        <taxon>Thermoplasmataceae</taxon>
        <taxon>Thermoplasma</taxon>
    </lineage>
</organism>
<gene>
    <name type="primary">mdh</name>
    <name type="ordered locus">TV1121</name>
    <name type="ORF">TVG1151701</name>
</gene>
<proteinExistence type="inferred from homology"/>
<reference key="1">
    <citation type="journal article" date="2000" name="Proc. Natl. Acad. Sci. U.S.A.">
        <title>Archaeal adaptation to higher temperatures revealed by genomic sequence of Thermoplasma volcanium.</title>
        <authorList>
            <person name="Kawashima T."/>
            <person name="Amano N."/>
            <person name="Koike H."/>
            <person name="Makino S."/>
            <person name="Higuchi S."/>
            <person name="Kawashima-Ohya Y."/>
            <person name="Watanabe K."/>
            <person name="Yamazaki M."/>
            <person name="Kanehori K."/>
            <person name="Kawamoto T."/>
            <person name="Nunoshiba T."/>
            <person name="Yamamoto Y."/>
            <person name="Aramaki H."/>
            <person name="Makino K."/>
            <person name="Suzuki M."/>
        </authorList>
    </citation>
    <scope>NUCLEOTIDE SEQUENCE [LARGE SCALE GENOMIC DNA]</scope>
    <source>
        <strain>ATCC 51530 / DSM 4299 / JCM 9571 / NBRC 15438 / GSS1</strain>
    </source>
</reference>
<evidence type="ECO:0000250" key="1">
    <source>
        <dbReference type="UniProtKB" id="O08349"/>
    </source>
</evidence>
<evidence type="ECO:0000250" key="2">
    <source>
        <dbReference type="UniProtKB" id="P61889"/>
    </source>
</evidence>
<evidence type="ECO:0000305" key="3"/>
<accession>Q979N9</accession>
<dbReference type="EC" id="1.1.1.37" evidence="1"/>
<dbReference type="EMBL" id="BA000011">
    <property type="protein sequence ID" value="BAB60263.1"/>
    <property type="molecule type" value="Genomic_DNA"/>
</dbReference>
<dbReference type="RefSeq" id="WP_010917355.1">
    <property type="nucleotide sequence ID" value="NC_002689.2"/>
</dbReference>
<dbReference type="SMR" id="Q979N9"/>
<dbReference type="STRING" id="273116.gene:9381920"/>
<dbReference type="PaxDb" id="273116-14325359"/>
<dbReference type="GeneID" id="1441237"/>
<dbReference type="KEGG" id="tvo:TVG1151701"/>
<dbReference type="eggNOG" id="arCOG00246">
    <property type="taxonomic scope" value="Archaea"/>
</dbReference>
<dbReference type="HOGENOM" id="CLU_045401_2_1_2"/>
<dbReference type="OrthoDB" id="2596at2157"/>
<dbReference type="PhylomeDB" id="Q979N9"/>
<dbReference type="Proteomes" id="UP000001017">
    <property type="component" value="Chromosome"/>
</dbReference>
<dbReference type="GO" id="GO:0004459">
    <property type="term" value="F:L-lactate dehydrogenase activity"/>
    <property type="evidence" value="ECO:0007669"/>
    <property type="project" value="TreeGrafter"/>
</dbReference>
<dbReference type="GO" id="GO:0030060">
    <property type="term" value="F:L-malate dehydrogenase (NAD+) activity"/>
    <property type="evidence" value="ECO:0007669"/>
    <property type="project" value="UniProtKB-EC"/>
</dbReference>
<dbReference type="GO" id="GO:0006089">
    <property type="term" value="P:lactate metabolic process"/>
    <property type="evidence" value="ECO:0007669"/>
    <property type="project" value="TreeGrafter"/>
</dbReference>
<dbReference type="GO" id="GO:0006099">
    <property type="term" value="P:tricarboxylic acid cycle"/>
    <property type="evidence" value="ECO:0007669"/>
    <property type="project" value="UniProtKB-KW"/>
</dbReference>
<dbReference type="CDD" id="cd01339">
    <property type="entry name" value="LDH-like_MDH"/>
    <property type="match status" value="1"/>
</dbReference>
<dbReference type="FunFam" id="3.40.50.720:FF:000018">
    <property type="entry name" value="Malate dehydrogenase"/>
    <property type="match status" value="1"/>
</dbReference>
<dbReference type="FunFam" id="3.90.110.10:FF:000004">
    <property type="entry name" value="Malate dehydrogenase"/>
    <property type="match status" value="1"/>
</dbReference>
<dbReference type="Gene3D" id="3.90.110.10">
    <property type="entry name" value="Lactate dehydrogenase/glycoside hydrolase, family 4, C-terminal"/>
    <property type="match status" value="1"/>
</dbReference>
<dbReference type="Gene3D" id="3.40.50.720">
    <property type="entry name" value="NAD(P)-binding Rossmann-like Domain"/>
    <property type="match status" value="1"/>
</dbReference>
<dbReference type="HAMAP" id="MF_00487">
    <property type="entry name" value="Malate_dehydrog_3"/>
    <property type="match status" value="1"/>
</dbReference>
<dbReference type="InterPro" id="IPR001557">
    <property type="entry name" value="L-lactate/malate_DH"/>
</dbReference>
<dbReference type="InterPro" id="IPR022383">
    <property type="entry name" value="Lactate/malate_DH_C"/>
</dbReference>
<dbReference type="InterPro" id="IPR001236">
    <property type="entry name" value="Lactate/malate_DH_N"/>
</dbReference>
<dbReference type="InterPro" id="IPR015955">
    <property type="entry name" value="Lactate_DH/Glyco_Ohase_4_C"/>
</dbReference>
<dbReference type="InterPro" id="IPR011275">
    <property type="entry name" value="Malate_DH_type3"/>
</dbReference>
<dbReference type="InterPro" id="IPR036291">
    <property type="entry name" value="NAD(P)-bd_dom_sf"/>
</dbReference>
<dbReference type="NCBIfam" id="TIGR01763">
    <property type="entry name" value="MalateDH_bact"/>
    <property type="match status" value="1"/>
</dbReference>
<dbReference type="NCBIfam" id="NF004863">
    <property type="entry name" value="PRK06223.1"/>
    <property type="match status" value="1"/>
</dbReference>
<dbReference type="PANTHER" id="PTHR43128">
    <property type="entry name" value="L-2-HYDROXYCARBOXYLATE DEHYDROGENASE (NAD(P)(+))"/>
    <property type="match status" value="1"/>
</dbReference>
<dbReference type="PANTHER" id="PTHR43128:SF16">
    <property type="entry name" value="L-LACTATE DEHYDROGENASE"/>
    <property type="match status" value="1"/>
</dbReference>
<dbReference type="Pfam" id="PF02866">
    <property type="entry name" value="Ldh_1_C"/>
    <property type="match status" value="1"/>
</dbReference>
<dbReference type="Pfam" id="PF00056">
    <property type="entry name" value="Ldh_1_N"/>
    <property type="match status" value="1"/>
</dbReference>
<dbReference type="PIRSF" id="PIRSF000102">
    <property type="entry name" value="Lac_mal_DH"/>
    <property type="match status" value="1"/>
</dbReference>
<dbReference type="PRINTS" id="PR00086">
    <property type="entry name" value="LLDHDRGNASE"/>
</dbReference>
<dbReference type="SUPFAM" id="SSF56327">
    <property type="entry name" value="LDH C-terminal domain-like"/>
    <property type="match status" value="1"/>
</dbReference>
<dbReference type="SUPFAM" id="SSF51735">
    <property type="entry name" value="NAD(P)-binding Rossmann-fold domains"/>
    <property type="match status" value="1"/>
</dbReference>
<protein>
    <recommendedName>
        <fullName evidence="1">Malate dehydrogenase</fullName>
        <ecNumber evidence="1">1.1.1.37</ecNumber>
    </recommendedName>
</protein>
<sequence>MARKKISVIGAGNVGATVAQFLATKELGDVYLFDVVDGIPEGKALDIQEGAPHWGYDLDVVGFSTSDSSNYKNMEGSDVIVVTAGMARKPGMSREDLFDKNVEIIADVSKNIKKYSPDSIIVVVSNPADIMAYALQKISGVDPQRIMGLGGSLDSSRFRTFLAKELDVSVEDVNAFVIGGHGDDMVPFIRYSSVAGIPIEKLLPKEKIDAIVKRTRFGGGEIVNYLKAGSAYYAPGISITAMVESVIKDKKRVIPCAAYITGKHAEHYGINNKFIGVPIKIGERGVEEIYDIDFLPEELELWKKSVASVEASSKNVDEWLKKHPQ</sequence>
<name>MDH_THEVO</name>
<feature type="chain" id="PRO_0000113497" description="Malate dehydrogenase">
    <location>
        <begin position="1"/>
        <end position="325"/>
    </location>
</feature>
<feature type="active site" description="Proton acceptor" evidence="2">
    <location>
        <position position="181"/>
    </location>
</feature>
<feature type="binding site" evidence="1">
    <location>
        <begin position="10"/>
        <end position="15"/>
    </location>
    <ligand>
        <name>NAD(+)</name>
        <dbReference type="ChEBI" id="CHEBI:57540"/>
    </ligand>
</feature>
<feature type="binding site" evidence="1">
    <location>
        <position position="34"/>
    </location>
    <ligand>
        <name>NAD(+)</name>
        <dbReference type="ChEBI" id="CHEBI:57540"/>
    </ligand>
</feature>
<feature type="binding site" evidence="2">
    <location>
        <position position="88"/>
    </location>
    <ligand>
        <name>substrate</name>
    </ligand>
</feature>
<feature type="binding site" evidence="2">
    <location>
        <position position="94"/>
    </location>
    <ligand>
        <name>substrate</name>
    </ligand>
</feature>
<feature type="binding site" evidence="1">
    <location>
        <position position="101"/>
    </location>
    <ligand>
        <name>NAD(+)</name>
        <dbReference type="ChEBI" id="CHEBI:57540"/>
    </ligand>
</feature>
<feature type="binding site" evidence="1">
    <location>
        <begin position="124"/>
        <end position="126"/>
    </location>
    <ligand>
        <name>NAD(+)</name>
        <dbReference type="ChEBI" id="CHEBI:57540"/>
    </ligand>
</feature>
<feature type="binding site" evidence="2">
    <location>
        <position position="126"/>
    </location>
    <ligand>
        <name>substrate</name>
    </ligand>
</feature>
<feature type="binding site" evidence="2">
    <location>
        <position position="157"/>
    </location>
    <ligand>
        <name>substrate</name>
    </ligand>
</feature>
<comment type="function">
    <text evidence="1">Catalyzes the reversible oxidation of malate to oxaloacetate.</text>
</comment>
<comment type="catalytic activity">
    <reaction evidence="1">
        <text>(S)-malate + NAD(+) = oxaloacetate + NADH + H(+)</text>
        <dbReference type="Rhea" id="RHEA:21432"/>
        <dbReference type="ChEBI" id="CHEBI:15378"/>
        <dbReference type="ChEBI" id="CHEBI:15589"/>
        <dbReference type="ChEBI" id="CHEBI:16452"/>
        <dbReference type="ChEBI" id="CHEBI:57540"/>
        <dbReference type="ChEBI" id="CHEBI:57945"/>
        <dbReference type="EC" id="1.1.1.37"/>
    </reaction>
</comment>
<comment type="similarity">
    <text evidence="3">Belongs to the LDH/MDH superfamily.</text>
</comment>
<keyword id="KW-0520">NAD</keyword>
<keyword id="KW-0560">Oxidoreductase</keyword>
<keyword id="KW-0816">Tricarboxylic acid cycle</keyword>